<accession>O60447</accession>
<accession>A6NKX8</accession>
<accession>B9A6J0</accession>
<accession>Q9H1Y9</accession>
<reference key="1">
    <citation type="journal article" date="1998" name="Hum. Mol. Genet.">
        <title>NB4S, a member of the TBC1 domain family of genes, is truncated as a result of a constitutional t(1;10)(p22;q21) chromosome translocation in a patient with stage 4S neuroblastoma.</title>
        <authorList>
            <person name="Roberts T."/>
            <person name="Chernova O."/>
            <person name="Cowell J.K."/>
        </authorList>
    </citation>
    <scope>NUCLEOTIDE SEQUENCE [MRNA] (ISOFORM 1)</scope>
    <scope>TISSUE SPECIFICITY</scope>
    <scope>DISEASE</scope>
    <scope>CHROMOSOMAL TRANSLOCATION WITH TRNG10</scope>
    <scope>VARIANTS VAL-82 AND VAL-336</scope>
    <source>
        <tissue>Brain</tissue>
    </source>
</reference>
<reference key="2">
    <citation type="journal article" date="2009" name="Genes Cells">
        <title>Identification and characterization of a novel Tre-2/Bub2/Cdc16 (TBC) protein that possesses Rab3A-GAP activity.</title>
        <authorList>
            <person name="Ishibashi K."/>
            <person name="Kanno E."/>
            <person name="Itoh T."/>
            <person name="Fukuda M."/>
        </authorList>
    </citation>
    <scope>NUCLEOTIDE SEQUENCE [MRNA] (ISOFORM 2)</scope>
    <scope>VARIANTS VAL-82 AND VAL-336</scope>
</reference>
<reference key="3">
    <citation type="journal article" date="2006" name="Nature">
        <title>The DNA sequence and biological annotation of human chromosome 1.</title>
        <authorList>
            <person name="Gregory S.G."/>
            <person name="Barlow K.F."/>
            <person name="McLay K.E."/>
            <person name="Kaul R."/>
            <person name="Swarbreck D."/>
            <person name="Dunham A."/>
            <person name="Scott C.E."/>
            <person name="Howe K.L."/>
            <person name="Woodfine K."/>
            <person name="Spencer C.C.A."/>
            <person name="Jones M.C."/>
            <person name="Gillson C."/>
            <person name="Searle S."/>
            <person name="Zhou Y."/>
            <person name="Kokocinski F."/>
            <person name="McDonald L."/>
            <person name="Evans R."/>
            <person name="Phillips K."/>
            <person name="Atkinson A."/>
            <person name="Cooper R."/>
            <person name="Jones C."/>
            <person name="Hall R.E."/>
            <person name="Andrews T.D."/>
            <person name="Lloyd C."/>
            <person name="Ainscough R."/>
            <person name="Almeida J.P."/>
            <person name="Ambrose K.D."/>
            <person name="Anderson F."/>
            <person name="Andrew R.W."/>
            <person name="Ashwell R.I.S."/>
            <person name="Aubin K."/>
            <person name="Babbage A.K."/>
            <person name="Bagguley C.L."/>
            <person name="Bailey J."/>
            <person name="Beasley H."/>
            <person name="Bethel G."/>
            <person name="Bird C.P."/>
            <person name="Bray-Allen S."/>
            <person name="Brown J.Y."/>
            <person name="Brown A.J."/>
            <person name="Buckley D."/>
            <person name="Burton J."/>
            <person name="Bye J."/>
            <person name="Carder C."/>
            <person name="Chapman J.C."/>
            <person name="Clark S.Y."/>
            <person name="Clarke G."/>
            <person name="Clee C."/>
            <person name="Cobley V."/>
            <person name="Collier R.E."/>
            <person name="Corby N."/>
            <person name="Coville G.J."/>
            <person name="Davies J."/>
            <person name="Deadman R."/>
            <person name="Dunn M."/>
            <person name="Earthrowl M."/>
            <person name="Ellington A.G."/>
            <person name="Errington H."/>
            <person name="Frankish A."/>
            <person name="Frankland J."/>
            <person name="French L."/>
            <person name="Garner P."/>
            <person name="Garnett J."/>
            <person name="Gay L."/>
            <person name="Ghori M.R.J."/>
            <person name="Gibson R."/>
            <person name="Gilby L.M."/>
            <person name="Gillett W."/>
            <person name="Glithero R.J."/>
            <person name="Grafham D.V."/>
            <person name="Griffiths C."/>
            <person name="Griffiths-Jones S."/>
            <person name="Grocock R."/>
            <person name="Hammond S."/>
            <person name="Harrison E.S.I."/>
            <person name="Hart E."/>
            <person name="Haugen E."/>
            <person name="Heath P.D."/>
            <person name="Holmes S."/>
            <person name="Holt K."/>
            <person name="Howden P.J."/>
            <person name="Hunt A.R."/>
            <person name="Hunt S.E."/>
            <person name="Hunter G."/>
            <person name="Isherwood J."/>
            <person name="James R."/>
            <person name="Johnson C."/>
            <person name="Johnson D."/>
            <person name="Joy A."/>
            <person name="Kay M."/>
            <person name="Kershaw J.K."/>
            <person name="Kibukawa M."/>
            <person name="Kimberley A.M."/>
            <person name="King A."/>
            <person name="Knights A.J."/>
            <person name="Lad H."/>
            <person name="Laird G."/>
            <person name="Lawlor S."/>
            <person name="Leongamornlert D.A."/>
            <person name="Lloyd D.M."/>
            <person name="Loveland J."/>
            <person name="Lovell J."/>
            <person name="Lush M.J."/>
            <person name="Lyne R."/>
            <person name="Martin S."/>
            <person name="Mashreghi-Mohammadi M."/>
            <person name="Matthews L."/>
            <person name="Matthews N.S.W."/>
            <person name="McLaren S."/>
            <person name="Milne S."/>
            <person name="Mistry S."/>
            <person name="Moore M.J.F."/>
            <person name="Nickerson T."/>
            <person name="O'Dell C.N."/>
            <person name="Oliver K."/>
            <person name="Palmeiri A."/>
            <person name="Palmer S.A."/>
            <person name="Parker A."/>
            <person name="Patel D."/>
            <person name="Pearce A.V."/>
            <person name="Peck A.I."/>
            <person name="Pelan S."/>
            <person name="Phelps K."/>
            <person name="Phillimore B.J."/>
            <person name="Plumb R."/>
            <person name="Rajan J."/>
            <person name="Raymond C."/>
            <person name="Rouse G."/>
            <person name="Saenphimmachak C."/>
            <person name="Sehra H.K."/>
            <person name="Sheridan E."/>
            <person name="Shownkeen R."/>
            <person name="Sims S."/>
            <person name="Skuce C.D."/>
            <person name="Smith M."/>
            <person name="Steward C."/>
            <person name="Subramanian S."/>
            <person name="Sycamore N."/>
            <person name="Tracey A."/>
            <person name="Tromans A."/>
            <person name="Van Helmond Z."/>
            <person name="Wall M."/>
            <person name="Wallis J.M."/>
            <person name="White S."/>
            <person name="Whitehead S.L."/>
            <person name="Wilkinson J.E."/>
            <person name="Willey D.L."/>
            <person name="Williams H."/>
            <person name="Wilming L."/>
            <person name="Wray P.W."/>
            <person name="Wu Z."/>
            <person name="Coulson A."/>
            <person name="Vaudin M."/>
            <person name="Sulston J.E."/>
            <person name="Durbin R.M."/>
            <person name="Hubbard T."/>
            <person name="Wooster R."/>
            <person name="Dunham I."/>
            <person name="Carter N.P."/>
            <person name="McVean G."/>
            <person name="Ross M.T."/>
            <person name="Harrow J."/>
            <person name="Olson M.V."/>
            <person name="Beck S."/>
            <person name="Rogers J."/>
            <person name="Bentley D.R."/>
        </authorList>
    </citation>
    <scope>NUCLEOTIDE SEQUENCE [LARGE SCALE GENOMIC DNA]</scope>
</reference>
<reference key="4">
    <citation type="journal article" date="2005" name="Genomics">
        <title>EVI5 is a novel centrosomal protein that binds to alpha- and gamma-tubulin.</title>
        <authorList>
            <person name="Faitar S.L."/>
            <person name="Dabbeekeh J.T.S."/>
            <person name="Ranalli T.A."/>
            <person name="Cowell J.K."/>
        </authorList>
    </citation>
    <scope>TISSUE SPECIFICITY</scope>
    <scope>OLIGOMERIZATION</scope>
    <scope>SUBCELLULAR LOCATION</scope>
    <scope>INTERACTION WITH ALPHA-TUBULIN AND GAMMA-TUBULIN</scope>
</reference>
<reference key="5">
    <citation type="journal article" date="2006" name="Cell">
        <title>The evi5 oncogene regulates cyclin accumulation by stabilizing the anaphase-promoting complex inhibitor emi1.</title>
        <authorList>
            <person name="Eldridge A.G."/>
            <person name="Loktev A.V."/>
            <person name="Hansen D.V."/>
            <person name="Verschuren E.W."/>
            <person name="Reimann J.D.R."/>
            <person name="Jackson P.K."/>
        </authorList>
    </citation>
    <scope>FUNCTION</scope>
    <scope>INTERACTION WITH FBXO5</scope>
    <scope>INDUCTION</scope>
    <scope>UBIQUITINATION</scope>
    <scope>SUBCELLULAR LOCATION</scope>
    <scope>PHOSPHORYLATION BY PLK1</scope>
</reference>
<reference key="6">
    <citation type="journal article" date="2006" name="Exp. Cell Res.">
        <title>EVI5 protein associates with the INCENP-aurora B kinase-survivin chromosomal passenger complex and is involved in the completion of cytokinesis.</title>
        <authorList>
            <person name="Faitar S.L."/>
            <person name="Sossey-Alaoui K."/>
            <person name="Ranalli T.A."/>
            <person name="Cowell J.K."/>
        </authorList>
    </citation>
    <scope>INTERACTION WITH AURKB; BIRC5 AND INCENP</scope>
    <scope>SUBCELLULAR LOCATION</scope>
</reference>
<reference key="7">
    <citation type="journal article" date="2008" name="Proc. Natl. Acad. Sci. U.S.A.">
        <title>A quantitative atlas of mitotic phosphorylation.</title>
        <authorList>
            <person name="Dephoure N."/>
            <person name="Zhou C."/>
            <person name="Villen J."/>
            <person name="Beausoleil S.A."/>
            <person name="Bakalarski C.E."/>
            <person name="Elledge S.J."/>
            <person name="Gygi S.P."/>
        </authorList>
    </citation>
    <scope>PHOSPHORYLATION [LARGE SCALE ANALYSIS] AT SER-776</scope>
    <scope>IDENTIFICATION BY MASS SPECTROMETRY [LARGE SCALE ANALYSIS]</scope>
    <source>
        <tissue>Cervix carcinoma</tissue>
    </source>
</reference>
<reference key="8">
    <citation type="journal article" date="2009" name="Anal. Chem.">
        <title>Lys-N and trypsin cover complementary parts of the phosphoproteome in a refined SCX-based approach.</title>
        <authorList>
            <person name="Gauci S."/>
            <person name="Helbig A.O."/>
            <person name="Slijper M."/>
            <person name="Krijgsveld J."/>
            <person name="Heck A.J."/>
            <person name="Mohammed S."/>
        </authorList>
    </citation>
    <scope>IDENTIFICATION BY MASS SPECTROMETRY [LARGE SCALE ANALYSIS]</scope>
</reference>
<reference key="9">
    <citation type="journal article" date="2013" name="J. Proteome Res.">
        <title>Toward a comprehensive characterization of a human cancer cell phosphoproteome.</title>
        <authorList>
            <person name="Zhou H."/>
            <person name="Di Palma S."/>
            <person name="Preisinger C."/>
            <person name="Peng M."/>
            <person name="Polat A.N."/>
            <person name="Heck A.J."/>
            <person name="Mohammed S."/>
        </authorList>
    </citation>
    <scope>PHOSPHORYLATION [LARGE SCALE ANALYSIS] AT SER-102 AND SER-689</scope>
    <scope>IDENTIFICATION BY MASS SPECTROMETRY [LARGE SCALE ANALYSIS]</scope>
    <source>
        <tissue>Cervix carcinoma</tissue>
        <tissue>Erythroleukemia</tissue>
    </source>
</reference>
<reference key="10">
    <citation type="journal article" date="2014" name="J. Proteomics">
        <title>An enzyme assisted RP-RPLC approach for in-depth analysis of human liver phosphoproteome.</title>
        <authorList>
            <person name="Bian Y."/>
            <person name="Song C."/>
            <person name="Cheng K."/>
            <person name="Dong M."/>
            <person name="Wang F."/>
            <person name="Huang J."/>
            <person name="Sun D."/>
            <person name="Wang L."/>
            <person name="Ye M."/>
            <person name="Zou H."/>
        </authorList>
    </citation>
    <scope>PHOSPHORYLATION [LARGE SCALE ANALYSIS] AT SER-497</scope>
    <scope>IDENTIFICATION BY MASS SPECTROMETRY [LARGE SCALE ANALYSIS]</scope>
    <source>
        <tissue>Liver</tissue>
    </source>
</reference>
<organism>
    <name type="scientific">Homo sapiens</name>
    <name type="common">Human</name>
    <dbReference type="NCBI Taxonomy" id="9606"/>
    <lineage>
        <taxon>Eukaryota</taxon>
        <taxon>Metazoa</taxon>
        <taxon>Chordata</taxon>
        <taxon>Craniata</taxon>
        <taxon>Vertebrata</taxon>
        <taxon>Euteleostomi</taxon>
        <taxon>Mammalia</taxon>
        <taxon>Eutheria</taxon>
        <taxon>Euarchontoglires</taxon>
        <taxon>Primates</taxon>
        <taxon>Haplorrhini</taxon>
        <taxon>Catarrhini</taxon>
        <taxon>Hominidae</taxon>
        <taxon>Homo</taxon>
    </lineage>
</organism>
<dbReference type="EMBL" id="AF008915">
    <property type="protein sequence ID" value="AAC16031.1"/>
    <property type="molecule type" value="mRNA"/>
</dbReference>
<dbReference type="EMBL" id="AB449875">
    <property type="protein sequence ID" value="BAH16618.1"/>
    <property type="molecule type" value="mRNA"/>
</dbReference>
<dbReference type="EMBL" id="AC104332">
    <property type="status" value="NOT_ANNOTATED_CDS"/>
    <property type="molecule type" value="Genomic_DNA"/>
</dbReference>
<dbReference type="EMBL" id="AC104456">
    <property type="status" value="NOT_ANNOTATED_CDS"/>
    <property type="molecule type" value="Genomic_DNA"/>
</dbReference>
<dbReference type="EMBL" id="AL133332">
    <property type="status" value="NOT_ANNOTATED_CDS"/>
    <property type="molecule type" value="Genomic_DNA"/>
</dbReference>
<dbReference type="EMBL" id="AL354890">
    <property type="status" value="NOT_ANNOTATED_CDS"/>
    <property type="molecule type" value="Genomic_DNA"/>
</dbReference>
<dbReference type="CCDS" id="CCDS30774.1">
    <molecule id="O60447-1"/>
</dbReference>
<dbReference type="CCDS" id="CCDS76179.1">
    <molecule id="O60447-2"/>
</dbReference>
<dbReference type="RefSeq" id="NP_001295177.1">
    <molecule id="O60447-2"/>
    <property type="nucleotide sequence ID" value="NM_001308248.2"/>
</dbReference>
<dbReference type="RefSeq" id="NP_005656.4">
    <molecule id="O60447-1"/>
    <property type="nucleotide sequence ID" value="NM_005665.5"/>
</dbReference>
<dbReference type="SMR" id="O60447"/>
<dbReference type="BioGRID" id="113584">
    <property type="interactions" value="70"/>
</dbReference>
<dbReference type="CORUM" id="O60447"/>
<dbReference type="DIP" id="DIP-38024N"/>
<dbReference type="FunCoup" id="O60447">
    <property type="interactions" value="1206"/>
</dbReference>
<dbReference type="IntAct" id="O60447">
    <property type="interactions" value="49"/>
</dbReference>
<dbReference type="STRING" id="9606.ENSP00000440826"/>
<dbReference type="GlyGen" id="O60447">
    <property type="glycosylation" value="2 sites, 1 O-linked glycan (2 sites)"/>
</dbReference>
<dbReference type="iPTMnet" id="O60447"/>
<dbReference type="PhosphoSitePlus" id="O60447"/>
<dbReference type="BioMuta" id="EVI5"/>
<dbReference type="jPOST" id="O60447"/>
<dbReference type="MassIVE" id="O60447"/>
<dbReference type="PaxDb" id="9606-ENSP00000359356"/>
<dbReference type="PeptideAtlas" id="O60447"/>
<dbReference type="ProteomicsDB" id="49405">
    <molecule id="O60447-1"/>
</dbReference>
<dbReference type="Pumba" id="O60447"/>
<dbReference type="Antibodypedia" id="19897">
    <property type="antibodies" value="88 antibodies from 20 providers"/>
</dbReference>
<dbReference type="DNASU" id="7813"/>
<dbReference type="Ensembl" id="ENST00000370331.5">
    <molecule id="O60447-1"/>
    <property type="protein sequence ID" value="ENSP00000359356.1"/>
    <property type="gene ID" value="ENSG00000067208.17"/>
</dbReference>
<dbReference type="Ensembl" id="ENST00000540033.3">
    <molecule id="O60447-2"/>
    <property type="protein sequence ID" value="ENSP00000440826.2"/>
    <property type="gene ID" value="ENSG00000067208.17"/>
</dbReference>
<dbReference type="GeneID" id="7813"/>
<dbReference type="KEGG" id="hsa:7813"/>
<dbReference type="UCSC" id="uc001dox.3">
    <molecule id="O60447-1"/>
    <property type="organism name" value="human"/>
</dbReference>
<dbReference type="AGR" id="HGNC:3501"/>
<dbReference type="CTD" id="7813"/>
<dbReference type="DisGeNET" id="7813"/>
<dbReference type="GeneCards" id="EVI5"/>
<dbReference type="HGNC" id="HGNC:3501">
    <property type="gene designation" value="EVI5"/>
</dbReference>
<dbReference type="HPA" id="ENSG00000067208">
    <property type="expression patterns" value="Low tissue specificity"/>
</dbReference>
<dbReference type="MIM" id="602942">
    <property type="type" value="gene"/>
</dbReference>
<dbReference type="neXtProt" id="NX_O60447"/>
<dbReference type="OpenTargets" id="ENSG00000067208"/>
<dbReference type="PharmGKB" id="PA27915"/>
<dbReference type="VEuPathDB" id="HostDB:ENSG00000067208"/>
<dbReference type="eggNOG" id="KOG4436">
    <property type="taxonomic scope" value="Eukaryota"/>
</dbReference>
<dbReference type="GeneTree" id="ENSGT00940000153846"/>
<dbReference type="HOGENOM" id="CLU_005350_6_0_1"/>
<dbReference type="InParanoid" id="O60447"/>
<dbReference type="OMA" id="LWGHIVA"/>
<dbReference type="OrthoDB" id="295078at2759"/>
<dbReference type="PAN-GO" id="O60447">
    <property type="GO annotations" value="2 GO annotations based on evolutionary models"/>
</dbReference>
<dbReference type="PhylomeDB" id="O60447"/>
<dbReference type="TreeFam" id="TF317184"/>
<dbReference type="PathwayCommons" id="O60447"/>
<dbReference type="SignaLink" id="O60447"/>
<dbReference type="SIGNOR" id="O60447"/>
<dbReference type="BioGRID-ORCS" id="7813">
    <property type="hits" value="8 hits in 1158 CRISPR screens"/>
</dbReference>
<dbReference type="CD-CODE" id="8C2F96ED">
    <property type="entry name" value="Centrosome"/>
</dbReference>
<dbReference type="ChiTaRS" id="EVI5">
    <property type="organism name" value="human"/>
</dbReference>
<dbReference type="GeneWiki" id="EVI5"/>
<dbReference type="GenomeRNAi" id="7813"/>
<dbReference type="Pharos" id="O60447">
    <property type="development level" value="Tbio"/>
</dbReference>
<dbReference type="PRO" id="PR:O60447"/>
<dbReference type="Proteomes" id="UP000005640">
    <property type="component" value="Chromosome 1"/>
</dbReference>
<dbReference type="RNAct" id="O60447">
    <property type="molecule type" value="protein"/>
</dbReference>
<dbReference type="Bgee" id="ENSG00000067208">
    <property type="expression patterns" value="Expressed in calcaneal tendon and 196 other cell types or tissues"/>
</dbReference>
<dbReference type="ExpressionAtlas" id="O60447">
    <property type="expression patterns" value="baseline and differential"/>
</dbReference>
<dbReference type="GO" id="GO:0005813">
    <property type="term" value="C:centrosome"/>
    <property type="evidence" value="ECO:0007669"/>
    <property type="project" value="UniProtKB-SubCell"/>
</dbReference>
<dbReference type="GO" id="GO:0005829">
    <property type="term" value="C:cytosol"/>
    <property type="evidence" value="ECO:0000314"/>
    <property type="project" value="UniProtKB"/>
</dbReference>
<dbReference type="GO" id="GO:0005634">
    <property type="term" value="C:nucleus"/>
    <property type="evidence" value="ECO:0007669"/>
    <property type="project" value="UniProtKB-SubCell"/>
</dbReference>
<dbReference type="GO" id="GO:0005819">
    <property type="term" value="C:spindle"/>
    <property type="evidence" value="ECO:0007669"/>
    <property type="project" value="UniProtKB-SubCell"/>
</dbReference>
<dbReference type="GO" id="GO:0005096">
    <property type="term" value="F:GTPase activator activity"/>
    <property type="evidence" value="ECO:0000314"/>
    <property type="project" value="UniProtKB"/>
</dbReference>
<dbReference type="GO" id="GO:0031267">
    <property type="term" value="F:small GTPase binding"/>
    <property type="evidence" value="ECO:0000353"/>
    <property type="project" value="UniProtKB"/>
</dbReference>
<dbReference type="GO" id="GO:0051301">
    <property type="term" value="P:cell division"/>
    <property type="evidence" value="ECO:0007669"/>
    <property type="project" value="UniProtKB-KW"/>
</dbReference>
<dbReference type="GO" id="GO:0043547">
    <property type="term" value="P:positive regulation of GTPase activity"/>
    <property type="evidence" value="ECO:0000314"/>
    <property type="project" value="UniProtKB"/>
</dbReference>
<dbReference type="GO" id="GO:0042147">
    <property type="term" value="P:retrograde transport, endosome to Golgi"/>
    <property type="evidence" value="ECO:0000315"/>
    <property type="project" value="UniProtKB"/>
</dbReference>
<dbReference type="FunFam" id="1.10.10.750:FF:000002">
    <property type="entry name" value="Ecotropic viral integration site 5"/>
    <property type="match status" value="1"/>
</dbReference>
<dbReference type="FunFam" id="1.10.472.80:FF:000002">
    <property type="entry name" value="Ecotropic viral integration site 5"/>
    <property type="match status" value="1"/>
</dbReference>
<dbReference type="FunFam" id="1.10.8.270:FF:000003">
    <property type="entry name" value="Ecotropic viral integration site 5"/>
    <property type="match status" value="1"/>
</dbReference>
<dbReference type="Gene3D" id="1.10.8.270">
    <property type="entry name" value="putative rabgap domain of human tbc1 domain family member 14 like domains"/>
    <property type="match status" value="1"/>
</dbReference>
<dbReference type="Gene3D" id="1.10.10.750">
    <property type="entry name" value="Ypt/Rab-GAP domain of gyp1p, domain 1"/>
    <property type="match status" value="1"/>
</dbReference>
<dbReference type="Gene3D" id="1.10.472.80">
    <property type="entry name" value="Ypt/Rab-GAP domain of gyp1p, domain 3"/>
    <property type="match status" value="1"/>
</dbReference>
<dbReference type="InterPro" id="IPR000195">
    <property type="entry name" value="Rab-GAP-TBC_dom"/>
</dbReference>
<dbReference type="InterPro" id="IPR035969">
    <property type="entry name" value="Rab-GAP_TBC_sf"/>
</dbReference>
<dbReference type="InterPro" id="IPR050302">
    <property type="entry name" value="Rab_GAP_TBC_domain"/>
</dbReference>
<dbReference type="PANTHER" id="PTHR47219:SF11">
    <property type="entry name" value="EVI5-LIKE PROTEIN ISOFORM X1"/>
    <property type="match status" value="1"/>
</dbReference>
<dbReference type="PANTHER" id="PTHR47219">
    <property type="entry name" value="RAB GTPASE-ACTIVATING PROTEIN 1-LIKE"/>
    <property type="match status" value="1"/>
</dbReference>
<dbReference type="Pfam" id="PF00566">
    <property type="entry name" value="RabGAP-TBC"/>
    <property type="match status" value="1"/>
</dbReference>
<dbReference type="SMART" id="SM00164">
    <property type="entry name" value="TBC"/>
    <property type="match status" value="1"/>
</dbReference>
<dbReference type="SUPFAM" id="SSF47923">
    <property type="entry name" value="Ypt/Rab-GAP domain of gyp1p"/>
    <property type="match status" value="2"/>
</dbReference>
<dbReference type="PROSITE" id="PS50086">
    <property type="entry name" value="TBC_RABGAP"/>
    <property type="match status" value="1"/>
</dbReference>
<comment type="function">
    <text evidence="6">Functions as a regulator of cell cycle progression by stabilizing the FBXO5 protein and promoting cyclin-A accumulation during interphase. May play a role in cytokinesis.</text>
</comment>
<comment type="subunit">
    <text evidence="5 6 7">Dimeric and monomeric. Interacts with alpha- and gamma-tubulin. Interacts with FBXO5. Interacts with the chromosome passenger complex (CPC) which is at least composed of AURKB/aurora-B, BIRC5/survivin, CDCA8/borealin and INCENP.</text>
</comment>
<comment type="interaction">
    <interactant intactId="EBI-852291">
        <id>O60447</id>
    </interactant>
    <interactant intactId="EBI-2875746">
        <id>P40617</id>
        <label>ARL4A</label>
    </interactant>
    <organismsDiffer>false</organismsDiffer>
    <experiments>3</experiments>
</comment>
<comment type="interaction">
    <interactant intactId="EBI-852291">
        <id>O60447</id>
    </interactant>
    <interactant intactId="EBI-740814">
        <id>Q8N715</id>
        <label>CCDC185</label>
    </interactant>
    <organismsDiffer>false</organismsDiffer>
    <experiments>3</experiments>
</comment>
<comment type="interaction">
    <interactant intactId="EBI-852291">
        <id>O60447</id>
    </interactant>
    <interactant intactId="EBI-741885">
        <id>Q96LK0</id>
        <label>CEP19</label>
    </interactant>
    <organismsDiffer>false</organismsDiffer>
    <experiments>3</experiments>
</comment>
<comment type="interaction">
    <interactant intactId="EBI-852291">
        <id>O60447</id>
    </interactant>
    <interactant intactId="EBI-751621">
        <id>P48730</id>
        <label>CSNK1D</label>
    </interactant>
    <organismsDiffer>false</organismsDiffer>
    <experiments>3</experiments>
</comment>
<comment type="interaction">
    <interactant intactId="EBI-852291">
        <id>O60447</id>
    </interactant>
    <interactant intactId="EBI-357481">
        <id>Q12959</id>
        <label>DLG1</label>
    </interactant>
    <organismsDiffer>false</organismsDiffer>
    <experiments>2</experiments>
</comment>
<comment type="interaction">
    <interactant intactId="EBI-852291">
        <id>O60447</id>
    </interactant>
    <interactant intactId="EBI-742350">
        <id>Q14241</id>
        <label>ELOA</label>
    </interactant>
    <organismsDiffer>false</organismsDiffer>
    <experiments>3</experiments>
</comment>
<comment type="interaction">
    <interactant intactId="EBI-852291">
        <id>O60447</id>
    </interactant>
    <interactant intactId="EBI-719941">
        <id>Q3B820</id>
        <label>FAM161A</label>
    </interactant>
    <organismsDiffer>false</organismsDiffer>
    <experiments>3</experiments>
</comment>
<comment type="interaction">
    <interactant intactId="EBI-852291">
        <id>O60447</id>
    </interactant>
    <interactant intactId="EBI-852298">
        <id>Q9UKT4</id>
        <label>FBXO5</label>
    </interactant>
    <organismsDiffer>false</organismsDiffer>
    <experiments>6</experiments>
</comment>
<comment type="interaction">
    <interactant intactId="EBI-852291">
        <id>O60447</id>
    </interactant>
    <interactant intactId="EBI-747481">
        <id>Q9NV31</id>
        <label>IMP3</label>
    </interactant>
    <organismsDiffer>false</organismsDiffer>
    <experiments>3</experiments>
</comment>
<comment type="interaction">
    <interactant intactId="EBI-852291">
        <id>O60447</id>
    </interactant>
    <interactant intactId="EBI-726510">
        <id>Q96BZ8</id>
        <label>LENG1</label>
    </interactant>
    <organismsDiffer>false</organismsDiffer>
    <experiments>3</experiments>
</comment>
<comment type="interaction">
    <interactant intactId="EBI-852291">
        <id>O60447</id>
    </interactant>
    <interactant intactId="EBI-8639312">
        <id>P25800</id>
        <label>LMO1</label>
    </interactant>
    <organismsDiffer>false</organismsDiffer>
    <experiments>3</experiments>
</comment>
<comment type="interaction">
    <interactant intactId="EBI-852291">
        <id>O60447</id>
    </interactant>
    <interactant intactId="EBI-11323212">
        <id>Q8IYB1</id>
        <label>MB21D2</label>
    </interactant>
    <organismsDiffer>false</organismsDiffer>
    <experiments>4</experiments>
</comment>
<comment type="interaction">
    <interactant intactId="EBI-852291">
        <id>O60447</id>
    </interactant>
    <interactant intactId="EBI-348259">
        <id>Q96EZ8</id>
        <label>MCRS1</label>
    </interactant>
    <organismsDiffer>false</organismsDiffer>
    <experiments>3</experiments>
</comment>
<comment type="interaction">
    <interactant intactId="EBI-852291">
        <id>O60447</id>
    </interactant>
    <interactant intactId="EBI-399257">
        <id>Q15014</id>
        <label>MORF4L2</label>
    </interactant>
    <organismsDiffer>false</organismsDiffer>
    <experiments>3</experiments>
</comment>
<comment type="interaction">
    <interactant intactId="EBI-852291">
        <id>O60447</id>
    </interactant>
    <interactant intactId="EBI-476768">
        <id>P53350</id>
        <label>PLK1</label>
    </interactant>
    <organismsDiffer>false</organismsDiffer>
    <experiments>3</experiments>
</comment>
<comment type="interaction">
    <interactant intactId="EBI-852291">
        <id>O60447</id>
    </interactant>
    <interactant intactId="EBI-1567797">
        <id>Q8WWY3</id>
        <label>PRPF31</label>
    </interactant>
    <organismsDiffer>false</organismsDiffer>
    <experiments>3</experiments>
</comment>
<comment type="interaction">
    <interactant intactId="EBI-852291">
        <id>O60447</id>
    </interactant>
    <interactant intactId="EBI-745098">
        <id>P62491</id>
        <label>RAB11A</label>
    </interactant>
    <organismsDiffer>false</organismsDiffer>
    <experiments>7</experiments>
</comment>
<comment type="interaction">
    <interactant intactId="EBI-852291">
        <id>O60447</id>
    </interactant>
    <interactant intactId="EBI-12048237">
        <id>Q6BDI9</id>
        <label>REP15</label>
    </interactant>
    <organismsDiffer>false</organismsDiffer>
    <experiments>4</experiments>
</comment>
<comment type="interaction">
    <interactant intactId="EBI-852291">
        <id>O60447</id>
    </interactant>
    <interactant intactId="EBI-11955057">
        <id>Q8N8B7-2</id>
        <label>TCEANC</label>
    </interactant>
    <organismsDiffer>false</organismsDiffer>
    <experiments>3</experiments>
</comment>
<comment type="interaction">
    <interactant intactId="EBI-852291">
        <id>O60447</id>
    </interactant>
    <interactant intactId="EBI-752102">
        <id>Q8WVP5</id>
        <label>TNFAIP8L1</label>
    </interactant>
    <organismsDiffer>false</organismsDiffer>
    <experiments>3</experiments>
</comment>
<comment type="interaction">
    <interactant intactId="EBI-852291">
        <id>O60447</id>
    </interactant>
    <interactant intactId="EBI-740232">
        <id>Q9NWS9-2</id>
        <label>ZNF446</label>
    </interactant>
    <organismsDiffer>false</organismsDiffer>
    <experiments>3</experiments>
</comment>
<comment type="subcellular location">
    <subcellularLocation>
        <location>Nucleus</location>
    </subcellularLocation>
    <subcellularLocation>
        <location>Cytoplasm</location>
        <location>Cytoskeleton</location>
        <location>Microtubule organizing center</location>
        <location>Centrosome</location>
    </subcellularLocation>
    <subcellularLocation>
        <location>Cytoplasm</location>
        <location>Cytoskeleton</location>
        <location>Spindle</location>
    </subcellularLocation>
    <text>Associates with the mitotic spindle through anaphase and remains within the midzone and midbody until completion of cytokinesis.</text>
</comment>
<comment type="alternative products">
    <event type="alternative splicing"/>
    <isoform>
        <id>O60447-1</id>
        <name>1</name>
        <sequence type="displayed"/>
    </isoform>
    <isoform>
        <id>O60447-2</id>
        <name>2</name>
        <sequence type="described" ref="VSP_056828"/>
    </isoform>
</comment>
<comment type="tissue specificity">
    <text evidence="5 9">Expressed in various cell lines (at protein level). Expressed in a wide range of tissues including brain and adrenal.</text>
</comment>
<comment type="induction">
    <text evidence="6">Down-regulated during mitosis through proteasomal degradation.</text>
</comment>
<comment type="PTM">
    <text evidence="6">Probably phosphorylated by PLK1; may be required for degradation during mitosis.</text>
</comment>
<comment type="PTM">
    <text evidence="6">Ubiquitinated. Degradation during prophase is ubiquitin-dependent.</text>
</comment>
<comment type="disease">
    <text evidence="9">A chromosomal aberration involving EVI5 is found is a patient with stage 4S neuroblastoma. Translocation t(1;10)(p22;q21) that forms a EVI5-TRNG10 fusion protein. TRNG10 is a probable structural transcript which is normally not translated.</text>
</comment>
<comment type="miscellaneous">
    <text>Depletion of EVI5 by RNAi causes cell cycle arrest and mitotic abnormalities.</text>
</comment>
<protein>
    <recommendedName>
        <fullName>Ecotropic viral integration site 5 protein homolog</fullName>
        <shortName>EVI-5</shortName>
    </recommendedName>
    <alternativeName>
        <fullName>Neuroblastoma stage 4S gene protein</fullName>
    </alternativeName>
</protein>
<name>EVI5_HUMAN</name>
<feature type="chain" id="PRO_0000256241" description="Ecotropic viral integration site 5 protein homolog">
    <location>
        <begin position="1"/>
        <end position="810"/>
    </location>
</feature>
<feature type="domain" description="Rab-GAP TBC" evidence="3">
    <location>
        <begin position="163"/>
        <end position="348"/>
    </location>
</feature>
<feature type="region of interest" description="Interaction with alpha-tubulin, gamma-tubulin, BIRC5 and FBXO5" evidence="6 7">
    <location>
        <begin position="1"/>
        <end position="483"/>
    </location>
</feature>
<feature type="region of interest" description="Disordered" evidence="4">
    <location>
        <begin position="49"/>
        <end position="80"/>
    </location>
</feature>
<feature type="region of interest" description="Disordered" evidence="4">
    <location>
        <begin position="98"/>
        <end position="123"/>
    </location>
</feature>
<feature type="region of interest" description="Dimerization">
    <location>
        <begin position="128"/>
        <end position="693"/>
    </location>
</feature>
<feature type="region of interest" description="Targeting to the centrosomes">
    <location>
        <begin position="377"/>
        <end position="810"/>
    </location>
</feature>
<feature type="region of interest" description="Interaction with AURKB and INCENP" evidence="7">
    <location>
        <begin position="487"/>
        <end position="810"/>
    </location>
</feature>
<feature type="region of interest" description="Disordered" evidence="4">
    <location>
        <begin position="756"/>
        <end position="810"/>
    </location>
</feature>
<feature type="coiled-coil region" evidence="2">
    <location>
        <begin position="406"/>
        <end position="716"/>
    </location>
</feature>
<feature type="compositionally biased region" description="Low complexity" evidence="4">
    <location>
        <begin position="51"/>
        <end position="80"/>
    </location>
</feature>
<feature type="compositionally biased region" description="Low complexity" evidence="4">
    <location>
        <begin position="103"/>
        <end position="123"/>
    </location>
</feature>
<feature type="compositionally biased region" description="Basic and acidic residues" evidence="4">
    <location>
        <begin position="785"/>
        <end position="810"/>
    </location>
</feature>
<feature type="site" description="Breakpoint for translocation to form EVI5-TRNG10 fusion protein">
    <location>
        <position position="594"/>
    </location>
</feature>
<feature type="modified residue" description="Phosphoserine" evidence="13">
    <location>
        <position position="102"/>
    </location>
</feature>
<feature type="modified residue" description="Phosphoserine" evidence="1">
    <location>
        <position position="113"/>
    </location>
</feature>
<feature type="modified residue" description="Phosphoserine" evidence="14">
    <location>
        <position position="497"/>
    </location>
</feature>
<feature type="modified residue" description="Phosphoserine" evidence="13">
    <location>
        <position position="689"/>
    </location>
</feature>
<feature type="modified residue" description="Phosphoserine" evidence="12">
    <location>
        <position position="776"/>
    </location>
</feature>
<feature type="modified residue" description="Phosphoserine" evidence="1">
    <location>
        <position position="778"/>
    </location>
</feature>
<feature type="splice variant" id="VSP_056828" description="In isoform 2." evidence="10">
    <original>K</original>
    <variation>KESASLADRLIQ</variation>
    <location>
        <position position="448"/>
    </location>
</feature>
<feature type="sequence variant" id="VAR_047753" description="In dbSNP:rs1064580." evidence="8 9">
    <original>D</original>
    <variation>V</variation>
    <location>
        <position position="82"/>
    </location>
</feature>
<feature type="sequence variant" id="VAR_028890" description="In dbSNP:rs2391199." evidence="8 9">
    <original>I</original>
    <variation>V</variation>
    <location>
        <position position="336"/>
    </location>
</feature>
<feature type="sequence variant" id="VAR_028891" description="In dbSNP:rs11808092.">
    <original>Q</original>
    <variation>H</variation>
    <location>
        <position position="612"/>
    </location>
</feature>
<feature type="sequence conflict" description="In Ref. 1; AAC16031 and 2; BAH16618." evidence="11" ref="1 2">
    <original>R</original>
    <variation>I</variation>
    <location>
        <position position="94"/>
    </location>
</feature>
<feature type="sequence conflict" description="In Ref. 1; AAC16031." evidence="11" ref="1">
    <original>K</original>
    <variation>Q</variation>
    <location>
        <position position="402"/>
    </location>
</feature>
<feature type="sequence conflict" description="In Ref. 1; AAC16031." evidence="11" ref="1">
    <original>R</original>
    <variation>K</variation>
    <location>
        <position position="714"/>
    </location>
</feature>
<keyword id="KW-0025">Alternative splicing</keyword>
<keyword id="KW-0131">Cell cycle</keyword>
<keyword id="KW-0132">Cell division</keyword>
<keyword id="KW-0160">Chromosomal rearrangement</keyword>
<keyword id="KW-0175">Coiled coil</keyword>
<keyword id="KW-0963">Cytoplasm</keyword>
<keyword id="KW-0206">Cytoskeleton</keyword>
<keyword id="KW-0539">Nucleus</keyword>
<keyword id="KW-0597">Phosphoprotein</keyword>
<keyword id="KW-1267">Proteomics identification</keyword>
<keyword id="KW-1185">Reference proteome</keyword>
<keyword id="KW-0832">Ubl conjugation</keyword>
<gene>
    <name type="primary">EVI5</name>
    <name type="synonym">NB4S</name>
</gene>
<sequence length="810" mass="92949">MVTNKMTAAFRNPSGKQVATDKVAEKLSSTLSWVKNTVSHTVSQMASQVASPSTSLHTTSSSTTLSTPALSPSSPSQLSPDDLELLAKLEEQNRLLETDSKSLRSVNGSRRNSGSSLVSSSSASSNLSHLEEDSWILWGRIVNEWEDVRKKKEKQVKELVHKGIPHHFRAIVWQLLCSAQSMPIKDQYSELLKMTSPCEKLIRRDIARTYPEHNFFKEKDSLGQEVLFNVMKAYSLVDREVGYCQGSAFIVGLLLMQMPEEEAFCVFVKLMQDYRLRELFKPSMAELGLCMYQFECMIQEHLPELFVHFQSQSFHTSMYASSWFLTIFLTTFPLPIATRIFDIFMSEGLEIVFRVGLALLQMNQAELMQLDMEGMLQHFQKVIPHQFDGVPDKLIQAAYQVKYNSKKMKKLEKEYTTIKTKEMEEQVEIKRLRTENRLLKQRIETLEKHKCSSNYNEDFVLQLEKELVQARLSEAESQCALKEMQDKVLDIEKRNNSLPDENNIARLQEELIAVKLREAEAIMGLKELRQQVKDLEEHWQRHLARTTGRWKDPPKKNAMNELQDELMTIRLREAETQAEIREIKQRMMEMETQNQINSNHLRRAEQEVISLQEKVQYLSAQNKGLLTQLSEAKRKQAEIECKNKEEVMAVRLREADSIAAVAELRQHIAELEIQKEEGKLQGQLNKSDSNQYIGELKDQIAELNHELRCLKGQRGFSGQPPFDGIHIVNHLIGDDESFHSSDEDFIDNSLQETGVGFPLHGKSGSMSLDPAVADGSESETEDSVLETRESNQVVQKERPPRRRESYSTTV</sequence>
<evidence type="ECO:0000250" key="1">
    <source>
        <dbReference type="UniProtKB" id="P97366"/>
    </source>
</evidence>
<evidence type="ECO:0000255" key="2"/>
<evidence type="ECO:0000255" key="3">
    <source>
        <dbReference type="PROSITE-ProRule" id="PRU00163"/>
    </source>
</evidence>
<evidence type="ECO:0000256" key="4">
    <source>
        <dbReference type="SAM" id="MobiDB-lite"/>
    </source>
</evidence>
<evidence type="ECO:0000269" key="5">
    <source>
    </source>
</evidence>
<evidence type="ECO:0000269" key="6">
    <source>
    </source>
</evidence>
<evidence type="ECO:0000269" key="7">
    <source>
    </source>
</evidence>
<evidence type="ECO:0000269" key="8">
    <source>
    </source>
</evidence>
<evidence type="ECO:0000269" key="9">
    <source>
    </source>
</evidence>
<evidence type="ECO:0000303" key="10">
    <source>
    </source>
</evidence>
<evidence type="ECO:0000305" key="11"/>
<evidence type="ECO:0007744" key="12">
    <source>
    </source>
</evidence>
<evidence type="ECO:0007744" key="13">
    <source>
    </source>
</evidence>
<evidence type="ECO:0007744" key="14">
    <source>
    </source>
</evidence>
<proteinExistence type="evidence at protein level"/>